<proteinExistence type="inferred from homology"/>
<gene>
    <name evidence="1" type="primary">thrS</name>
    <name type="ordered locus">WIGBR0810</name>
</gene>
<evidence type="ECO:0000255" key="1">
    <source>
        <dbReference type="HAMAP-Rule" id="MF_00184"/>
    </source>
</evidence>
<evidence type="ECO:0000255" key="2">
    <source>
        <dbReference type="PROSITE-ProRule" id="PRU01228"/>
    </source>
</evidence>
<name>SYT_WIGBR</name>
<reference key="1">
    <citation type="journal article" date="2002" name="Nat. Genet.">
        <title>Genome sequence of the endocellular obligate symbiont of tsetse flies, Wigglesworthia glossinidia.</title>
        <authorList>
            <person name="Akman L."/>
            <person name="Yamashita A."/>
            <person name="Watanabe H."/>
            <person name="Oshima K."/>
            <person name="Shiba T."/>
            <person name="Hattori M."/>
            <person name="Aksoy S."/>
        </authorList>
    </citation>
    <scope>NUCLEOTIDE SEQUENCE [LARGE SCALE GENOMIC DNA]</scope>
</reference>
<sequence length="636" mass="75381">MPIINFNNKEILFNYPISIIEIIKKFDKNLSENCIAAKINGKLLDVSEIINYDGSLELVKPENKIGIRIIRCSCSHLLGYAIKQLWPTSKMATNNITENGFYYDIDLNHKLSKNDLKLIEKKMHQLLKINFKINKINVTWGKAYEMFKNLNEIYKIKILEDNISKNSSLYIYHQEQYVDLCTLPHVPNIKFCMFFKIQKISGAYWKGNKKNKMLQRIYVTSWDSNSKLKNFIKNIKELEHRDHRKIGKKLDLFHIYENSPGMVFWHHNGWIIFRILEKFIRKKLKKFYYQEVKTPCIIDHDLWRLSGHLDNYKNYMFHTNSENKQYCIKPMNCPAHVLIFKKKIRSYKELPFRISEFGSCHRNEPSGSLHGLMRIRNFTQDDAHIFCMHDQILSEVSSCIKMIYEVYSCFGFKKILVKLSTRPENRIGSDEIWDFAEKQLELSLKKNKILFKIDLNEGAFYGPKIEFTLLDSLNRKWQCGTIQLDLCLANKLQAYYINNKNEKTNPVIIHRAILGSMERFIGIITEEFSGKYPLWISPIQVGVINVSVDQIDYVKKITKFFLQKKIRIISDLRNEKISFKIREYTLRFIPYIIICGKKEMESNSISVRNKYGKQLKYSSLEKFYNVIYEEIKQKKT</sequence>
<protein>
    <recommendedName>
        <fullName evidence="1">Threonine--tRNA ligase</fullName>
        <ecNumber evidence="1">6.1.1.3</ecNumber>
    </recommendedName>
    <alternativeName>
        <fullName evidence="1">Threonyl-tRNA synthetase</fullName>
        <shortName evidence="1">ThrRS</shortName>
    </alternativeName>
</protein>
<organism>
    <name type="scientific">Wigglesworthia glossinidia brevipalpis</name>
    <dbReference type="NCBI Taxonomy" id="36870"/>
    <lineage>
        <taxon>Bacteria</taxon>
        <taxon>Pseudomonadati</taxon>
        <taxon>Pseudomonadota</taxon>
        <taxon>Gammaproteobacteria</taxon>
        <taxon>Enterobacterales</taxon>
        <taxon>Erwiniaceae</taxon>
        <taxon>Wigglesworthia</taxon>
    </lineage>
</organism>
<keyword id="KW-0030">Aminoacyl-tRNA synthetase</keyword>
<keyword id="KW-0067">ATP-binding</keyword>
<keyword id="KW-0963">Cytoplasm</keyword>
<keyword id="KW-0436">Ligase</keyword>
<keyword id="KW-0479">Metal-binding</keyword>
<keyword id="KW-0547">Nucleotide-binding</keyword>
<keyword id="KW-0648">Protein biosynthesis</keyword>
<keyword id="KW-1185">Reference proteome</keyword>
<keyword id="KW-0694">RNA-binding</keyword>
<keyword id="KW-0820">tRNA-binding</keyword>
<keyword id="KW-0862">Zinc</keyword>
<accession>Q8D3C0</accession>
<dbReference type="EC" id="6.1.1.3" evidence="1"/>
<dbReference type="EMBL" id="BA000021">
    <property type="protein sequence ID" value="BAC24227.1"/>
    <property type="molecule type" value="Genomic_DNA"/>
</dbReference>
<dbReference type="SMR" id="Q8D3C0"/>
<dbReference type="STRING" id="36870.gene:10368559"/>
<dbReference type="KEGG" id="wbr:thrS"/>
<dbReference type="eggNOG" id="COG0441">
    <property type="taxonomic scope" value="Bacteria"/>
</dbReference>
<dbReference type="HOGENOM" id="CLU_008554_0_1_6"/>
<dbReference type="OrthoDB" id="9802304at2"/>
<dbReference type="Proteomes" id="UP000000562">
    <property type="component" value="Chromosome"/>
</dbReference>
<dbReference type="GO" id="GO:0005829">
    <property type="term" value="C:cytosol"/>
    <property type="evidence" value="ECO:0007669"/>
    <property type="project" value="TreeGrafter"/>
</dbReference>
<dbReference type="GO" id="GO:0005524">
    <property type="term" value="F:ATP binding"/>
    <property type="evidence" value="ECO:0007669"/>
    <property type="project" value="UniProtKB-UniRule"/>
</dbReference>
<dbReference type="GO" id="GO:0046872">
    <property type="term" value="F:metal ion binding"/>
    <property type="evidence" value="ECO:0007669"/>
    <property type="project" value="UniProtKB-KW"/>
</dbReference>
<dbReference type="GO" id="GO:0004829">
    <property type="term" value="F:threonine-tRNA ligase activity"/>
    <property type="evidence" value="ECO:0007669"/>
    <property type="project" value="UniProtKB-UniRule"/>
</dbReference>
<dbReference type="GO" id="GO:0000049">
    <property type="term" value="F:tRNA binding"/>
    <property type="evidence" value="ECO:0007669"/>
    <property type="project" value="UniProtKB-KW"/>
</dbReference>
<dbReference type="GO" id="GO:0006435">
    <property type="term" value="P:threonyl-tRNA aminoacylation"/>
    <property type="evidence" value="ECO:0007669"/>
    <property type="project" value="UniProtKB-UniRule"/>
</dbReference>
<dbReference type="CDD" id="cd01667">
    <property type="entry name" value="TGS_ThrRS"/>
    <property type="match status" value="1"/>
</dbReference>
<dbReference type="CDD" id="cd00860">
    <property type="entry name" value="ThrRS_anticodon"/>
    <property type="match status" value="1"/>
</dbReference>
<dbReference type="CDD" id="cd00771">
    <property type="entry name" value="ThrRS_core"/>
    <property type="match status" value="1"/>
</dbReference>
<dbReference type="FunFam" id="3.30.930.10:FF:000002">
    <property type="entry name" value="Threonine--tRNA ligase"/>
    <property type="match status" value="1"/>
</dbReference>
<dbReference type="FunFam" id="3.40.50.800:FF:000001">
    <property type="entry name" value="Threonine--tRNA ligase"/>
    <property type="match status" value="1"/>
</dbReference>
<dbReference type="Gene3D" id="3.10.20.30">
    <property type="match status" value="1"/>
</dbReference>
<dbReference type="Gene3D" id="3.30.54.20">
    <property type="match status" value="1"/>
</dbReference>
<dbReference type="Gene3D" id="3.40.50.800">
    <property type="entry name" value="Anticodon-binding domain"/>
    <property type="match status" value="1"/>
</dbReference>
<dbReference type="Gene3D" id="3.30.930.10">
    <property type="entry name" value="Bira Bifunctional Protein, Domain 2"/>
    <property type="match status" value="1"/>
</dbReference>
<dbReference type="Gene3D" id="3.30.980.10">
    <property type="entry name" value="Threonyl-trna Synthetase, Chain A, domain 2"/>
    <property type="match status" value="1"/>
</dbReference>
<dbReference type="HAMAP" id="MF_00184">
    <property type="entry name" value="Thr_tRNA_synth"/>
    <property type="match status" value="1"/>
</dbReference>
<dbReference type="InterPro" id="IPR002314">
    <property type="entry name" value="aa-tRNA-synt_IIb"/>
</dbReference>
<dbReference type="InterPro" id="IPR006195">
    <property type="entry name" value="aa-tRNA-synth_II"/>
</dbReference>
<dbReference type="InterPro" id="IPR045864">
    <property type="entry name" value="aa-tRNA-synth_II/BPL/LPL"/>
</dbReference>
<dbReference type="InterPro" id="IPR004154">
    <property type="entry name" value="Anticodon-bd"/>
</dbReference>
<dbReference type="InterPro" id="IPR036621">
    <property type="entry name" value="Anticodon-bd_dom_sf"/>
</dbReference>
<dbReference type="InterPro" id="IPR012675">
    <property type="entry name" value="Beta-grasp_dom_sf"/>
</dbReference>
<dbReference type="InterPro" id="IPR004095">
    <property type="entry name" value="TGS"/>
</dbReference>
<dbReference type="InterPro" id="IPR012676">
    <property type="entry name" value="TGS-like"/>
</dbReference>
<dbReference type="InterPro" id="IPR002320">
    <property type="entry name" value="Thr-tRNA-ligase_IIa"/>
</dbReference>
<dbReference type="InterPro" id="IPR018163">
    <property type="entry name" value="Thr/Ala-tRNA-synth_IIc_edit"/>
</dbReference>
<dbReference type="InterPro" id="IPR047246">
    <property type="entry name" value="ThrRS_anticodon"/>
</dbReference>
<dbReference type="InterPro" id="IPR033728">
    <property type="entry name" value="ThrRS_core"/>
</dbReference>
<dbReference type="InterPro" id="IPR012947">
    <property type="entry name" value="tRNA_SAD"/>
</dbReference>
<dbReference type="NCBIfam" id="TIGR00418">
    <property type="entry name" value="thrS"/>
    <property type="match status" value="1"/>
</dbReference>
<dbReference type="PANTHER" id="PTHR11451:SF44">
    <property type="entry name" value="THREONINE--TRNA LIGASE, CHLOROPLASTIC_MITOCHONDRIAL 2"/>
    <property type="match status" value="1"/>
</dbReference>
<dbReference type="PANTHER" id="PTHR11451">
    <property type="entry name" value="THREONINE-TRNA LIGASE"/>
    <property type="match status" value="1"/>
</dbReference>
<dbReference type="Pfam" id="PF03129">
    <property type="entry name" value="HGTP_anticodon"/>
    <property type="match status" value="1"/>
</dbReference>
<dbReference type="Pfam" id="PF00587">
    <property type="entry name" value="tRNA-synt_2b"/>
    <property type="match status" value="1"/>
</dbReference>
<dbReference type="Pfam" id="PF07973">
    <property type="entry name" value="tRNA_SAD"/>
    <property type="match status" value="1"/>
</dbReference>
<dbReference type="PRINTS" id="PR01047">
    <property type="entry name" value="TRNASYNTHTHR"/>
</dbReference>
<dbReference type="SMART" id="SM00863">
    <property type="entry name" value="tRNA_SAD"/>
    <property type="match status" value="1"/>
</dbReference>
<dbReference type="SUPFAM" id="SSF52954">
    <property type="entry name" value="Class II aaRS ABD-related"/>
    <property type="match status" value="1"/>
</dbReference>
<dbReference type="SUPFAM" id="SSF55681">
    <property type="entry name" value="Class II aaRS and biotin synthetases"/>
    <property type="match status" value="1"/>
</dbReference>
<dbReference type="SUPFAM" id="SSF81271">
    <property type="entry name" value="TGS-like"/>
    <property type="match status" value="1"/>
</dbReference>
<dbReference type="SUPFAM" id="SSF55186">
    <property type="entry name" value="ThrRS/AlaRS common domain"/>
    <property type="match status" value="1"/>
</dbReference>
<dbReference type="PROSITE" id="PS50862">
    <property type="entry name" value="AA_TRNA_LIGASE_II"/>
    <property type="match status" value="1"/>
</dbReference>
<dbReference type="PROSITE" id="PS51880">
    <property type="entry name" value="TGS"/>
    <property type="match status" value="1"/>
</dbReference>
<feature type="chain" id="PRO_0000101086" description="Threonine--tRNA ligase">
    <location>
        <begin position="1"/>
        <end position="636"/>
    </location>
</feature>
<feature type="domain" description="TGS" evidence="2">
    <location>
        <begin position="1"/>
        <end position="60"/>
    </location>
</feature>
<feature type="region of interest" description="Catalytic" evidence="1">
    <location>
        <begin position="242"/>
        <end position="533"/>
    </location>
</feature>
<feature type="binding site" evidence="1">
    <location>
        <position position="333"/>
    </location>
    <ligand>
        <name>Zn(2+)</name>
        <dbReference type="ChEBI" id="CHEBI:29105"/>
    </ligand>
</feature>
<feature type="binding site" evidence="1">
    <location>
        <position position="384"/>
    </location>
    <ligand>
        <name>Zn(2+)</name>
        <dbReference type="ChEBI" id="CHEBI:29105"/>
    </ligand>
</feature>
<feature type="binding site" evidence="1">
    <location>
        <position position="510"/>
    </location>
    <ligand>
        <name>Zn(2+)</name>
        <dbReference type="ChEBI" id="CHEBI:29105"/>
    </ligand>
</feature>
<comment type="function">
    <text evidence="1">Catalyzes the attachment of threonine to tRNA(Thr) in a two-step reaction: L-threonine is first activated by ATP to form Thr-AMP and then transferred to the acceptor end of tRNA(Thr). Also edits incorrectly charged L-seryl-tRNA(Thr).</text>
</comment>
<comment type="catalytic activity">
    <reaction evidence="1">
        <text>tRNA(Thr) + L-threonine + ATP = L-threonyl-tRNA(Thr) + AMP + diphosphate + H(+)</text>
        <dbReference type="Rhea" id="RHEA:24624"/>
        <dbReference type="Rhea" id="RHEA-COMP:9670"/>
        <dbReference type="Rhea" id="RHEA-COMP:9704"/>
        <dbReference type="ChEBI" id="CHEBI:15378"/>
        <dbReference type="ChEBI" id="CHEBI:30616"/>
        <dbReference type="ChEBI" id="CHEBI:33019"/>
        <dbReference type="ChEBI" id="CHEBI:57926"/>
        <dbReference type="ChEBI" id="CHEBI:78442"/>
        <dbReference type="ChEBI" id="CHEBI:78534"/>
        <dbReference type="ChEBI" id="CHEBI:456215"/>
        <dbReference type="EC" id="6.1.1.3"/>
    </reaction>
</comment>
<comment type="cofactor">
    <cofactor evidence="1">
        <name>Zn(2+)</name>
        <dbReference type="ChEBI" id="CHEBI:29105"/>
    </cofactor>
    <text evidence="1">Binds 1 zinc ion per subunit.</text>
</comment>
<comment type="subunit">
    <text evidence="1">Homodimer.</text>
</comment>
<comment type="subcellular location">
    <subcellularLocation>
        <location evidence="1">Cytoplasm</location>
    </subcellularLocation>
</comment>
<comment type="similarity">
    <text evidence="1">Belongs to the class-II aminoacyl-tRNA synthetase family.</text>
</comment>